<comment type="function">
    <text evidence="1">Involved in several stages of intracellular trafficking. Interacts with membranes containing phosphatidylinositol 3-phosphate (PtdIns(3P)) or phosphatidylinositol 3,5-bisphosphate (PtdIns(3,5)P2). Acts in part as component of the retromer membrane-deforming SNX-BAR subcomplex. The SNX-BAR retromer mediates retrograde transport of cargo proteins from endosomes to the trans-Golgi network (TGN) and is involved in endosome-to-plasma membrane transport for cargo protein recycling. The SNX-BAR subcomplex functions to deform the donor membrane into a tubular profile called endosome-to-TGN transport carrier (ETC). Can sense membrane curvature and has in vitro vesicle-to-membrane remodeling activity. Required for retrograde endosome-to-TGN transport of TGN38. Promotes KALRN- and RHOG-dependent but retromer-independent membrane remodeling such as lamellipodium formation; the function is dependent on GEF activity of KALRN (By similarity).</text>
</comment>
<comment type="subunit">
    <text evidence="1">Predominantly forms heterodimers with BAR domain-containing sorting nexins SNX5, SNX6 and SNX32; can self-associate to form homodimers. The heterodimers are proposed to self-assemble into helical arrays on the membrane to stabilize and expand local membrane curvature underlying endosomal tubule formation. Thought to be a component of the originally described retromer complex (also called SNX-BAR retromer) which is a pentamer containing the heterotrimeric retromer cargo-selective complex (CSC), also decribed as vacuolar protein sorting subcomplex (VPS) and a heterodimeric membrane-deforming subcomplex formed between SNX1 or SNX2 and SNX5 or SNX6 (also called SNX-BAR subcomplex); the respective CSC and SNX-BAR subcomplexes associate with low affinity. Interacts with SNX5, SNX6, SNX32, VPS26A, VPS29, VPS35, FNBP1, KALRN, RHOG (GDP-bound form) (By similarity).</text>
</comment>
<comment type="subcellular location">
    <subcellularLocation>
        <location>Early endosome membrane</location>
        <topology>Peripheral membrane protein</topology>
        <orientation evidence="1">Cytoplasmic side</orientation>
    </subcellularLocation>
    <subcellularLocation>
        <location>Cell projection</location>
        <location>Lamellipodium</location>
    </subcellularLocation>
    <text evidence="1">Colocalized with SORT1 to tubular endosomal membrane structures called endosome-to-TGN transport carriers (ETCs) which are budding from early endosome vacuoles just before maturing into late endosome vacuoles. Colocalized with F-actin at the leading edge of lamellipodia in cells in a KALRN-dependent manner (By similarity).</text>
</comment>
<comment type="domain">
    <text evidence="1">The BAR domain is able to sense membrane curvature upon dimerization. Membrane remodeling seems to implicate insertion of a N-terminal amphipathic helix (AH) in the membrane (By similarity).</text>
</comment>
<comment type="similarity">
    <text evidence="7">Belongs to the sorting nexin family.</text>
</comment>
<sequence length="519" mass="58454">MAAEREPPPLGDGKPTDFEELEDGEDLFTSTVSTLESSPSSPDPASFLAEDISTNSNGPKPAEVALDDDREDLFAEATEEVSLDSPEREPILSSETSPAVTPVTPTTLIAPRIESKSMSAPVIFDRSRDEIEEEANGDVFDIEIGVSDPEKVGDGMNAYMAYRVTTKTSLSMFSKSEFSVKRRFSDFLGLHSKLASKYLHVGYIVPPAPEKSIVGMTKVKVGKEDSSSTEFVEKRRAALERYLQRTVKHPTLLQDPDLRQFLESSELPRAVNTQALSGAGILRMVNKAADAVNKMTIKMNESDAWFEEKQQQFENQDQQLRKLHASVEALVCHRKELSANTAAFAKSAAMLGNSEDHTALSRALSQLAEVEEKIDQLHQEQAFADFYMFSELLSDYIRLIAAVKGVFDHRVKCWQKWEDAQITLLKKRETEAKMMVANKPDKIQQAKNEIREWEAKVQQGERDFEQISKTIRKEVGRFEKERVKDFKTVIIKYLESLVQTQQQLIKYWEAFLPEAKAIA</sequence>
<keyword id="KW-0007">Acetylation</keyword>
<keyword id="KW-0966">Cell projection</keyword>
<keyword id="KW-0967">Endosome</keyword>
<keyword id="KW-0446">Lipid-binding</keyword>
<keyword id="KW-0472">Membrane</keyword>
<keyword id="KW-0597">Phosphoprotein</keyword>
<keyword id="KW-0653">Protein transport</keyword>
<keyword id="KW-1185">Reference proteome</keyword>
<keyword id="KW-0813">Transport</keyword>
<evidence type="ECO:0000250" key="1">
    <source>
        <dbReference type="UniProtKB" id="O60749"/>
    </source>
</evidence>
<evidence type="ECO:0000250" key="2">
    <source>
        <dbReference type="UniProtKB" id="Q13596"/>
    </source>
</evidence>
<evidence type="ECO:0000250" key="3">
    <source>
        <dbReference type="UniProtKB" id="Q96L94"/>
    </source>
</evidence>
<evidence type="ECO:0000250" key="4">
    <source>
        <dbReference type="UniProtKB" id="Q9CWK8"/>
    </source>
</evidence>
<evidence type="ECO:0000255" key="5">
    <source>
        <dbReference type="PROSITE-ProRule" id="PRU00147"/>
    </source>
</evidence>
<evidence type="ECO:0000256" key="6">
    <source>
        <dbReference type="SAM" id="MobiDB-lite"/>
    </source>
</evidence>
<evidence type="ECO:0000305" key="7"/>
<reference key="1">
    <citation type="submission" date="2005-11" db="EMBL/GenBank/DDBJ databases">
        <authorList>
            <consortium name="NIH - Mammalian Gene Collection (MGC) project"/>
        </authorList>
    </citation>
    <scope>NUCLEOTIDE SEQUENCE [LARGE SCALE MRNA]</scope>
    <source>
        <strain>Crossbred X Angus</strain>
        <tissue>Liver</tissue>
    </source>
</reference>
<name>SNX2_BOVIN</name>
<protein>
    <recommendedName>
        <fullName>Sorting nexin-2</fullName>
    </recommendedName>
</protein>
<gene>
    <name type="primary">SNX2</name>
</gene>
<dbReference type="EMBL" id="BC109562">
    <property type="protein sequence ID" value="AAI09563.1"/>
    <property type="molecule type" value="mRNA"/>
</dbReference>
<dbReference type="RefSeq" id="NP_001033608.1">
    <property type="nucleotide sequence ID" value="NM_001038519.1"/>
</dbReference>
<dbReference type="SMR" id="Q2TBW7"/>
<dbReference type="FunCoup" id="Q2TBW7">
    <property type="interactions" value="3808"/>
</dbReference>
<dbReference type="STRING" id="9913.ENSBTAP00000035453"/>
<dbReference type="PaxDb" id="9913-ENSBTAP00000035453"/>
<dbReference type="PeptideAtlas" id="Q2TBW7"/>
<dbReference type="GeneID" id="509769"/>
<dbReference type="KEGG" id="bta:509769"/>
<dbReference type="CTD" id="6643"/>
<dbReference type="eggNOG" id="KOG2273">
    <property type="taxonomic scope" value="Eukaryota"/>
</dbReference>
<dbReference type="InParanoid" id="Q2TBW7"/>
<dbReference type="OrthoDB" id="271164at2759"/>
<dbReference type="Proteomes" id="UP000009136">
    <property type="component" value="Unplaced"/>
</dbReference>
<dbReference type="GO" id="GO:0005829">
    <property type="term" value="C:cytosol"/>
    <property type="evidence" value="ECO:0007669"/>
    <property type="project" value="GOC"/>
</dbReference>
<dbReference type="GO" id="GO:0031901">
    <property type="term" value="C:early endosome membrane"/>
    <property type="evidence" value="ECO:0007669"/>
    <property type="project" value="UniProtKB-SubCell"/>
</dbReference>
<dbReference type="GO" id="GO:0005768">
    <property type="term" value="C:endosome"/>
    <property type="evidence" value="ECO:0000318"/>
    <property type="project" value="GO_Central"/>
</dbReference>
<dbReference type="GO" id="GO:0010008">
    <property type="term" value="C:endosome membrane"/>
    <property type="evidence" value="ECO:0000250"/>
    <property type="project" value="UniProtKB"/>
</dbReference>
<dbReference type="GO" id="GO:0030027">
    <property type="term" value="C:lamellipodium"/>
    <property type="evidence" value="ECO:0007669"/>
    <property type="project" value="UniProtKB-SubCell"/>
</dbReference>
<dbReference type="GO" id="GO:0030904">
    <property type="term" value="C:retromer complex"/>
    <property type="evidence" value="ECO:0007669"/>
    <property type="project" value="InterPro"/>
</dbReference>
<dbReference type="GO" id="GO:0035091">
    <property type="term" value="F:phosphatidylinositol binding"/>
    <property type="evidence" value="ECO:0000318"/>
    <property type="project" value="GO_Central"/>
</dbReference>
<dbReference type="GO" id="GO:0034498">
    <property type="term" value="P:early endosome to Golgi transport"/>
    <property type="evidence" value="ECO:0000318"/>
    <property type="project" value="GO_Central"/>
</dbReference>
<dbReference type="GO" id="GO:0006886">
    <property type="term" value="P:intracellular protein transport"/>
    <property type="evidence" value="ECO:0007669"/>
    <property type="project" value="InterPro"/>
</dbReference>
<dbReference type="GO" id="GO:0072673">
    <property type="term" value="P:lamellipodium morphogenesis"/>
    <property type="evidence" value="ECO:0000250"/>
    <property type="project" value="UniProtKB"/>
</dbReference>
<dbReference type="GO" id="GO:0042147">
    <property type="term" value="P:retrograde transport, endosome to Golgi"/>
    <property type="evidence" value="ECO:0000250"/>
    <property type="project" value="UniProtKB"/>
</dbReference>
<dbReference type="CDD" id="cd07282">
    <property type="entry name" value="PX_SNX2"/>
    <property type="match status" value="1"/>
</dbReference>
<dbReference type="FunFam" id="1.20.1270.60:FF:000012">
    <property type="entry name" value="Sorting nexin 2"/>
    <property type="match status" value="1"/>
</dbReference>
<dbReference type="FunFam" id="3.30.1520.10:FF:000016">
    <property type="entry name" value="Sorting nexin 2"/>
    <property type="match status" value="1"/>
</dbReference>
<dbReference type="Gene3D" id="1.20.1270.60">
    <property type="entry name" value="Arfaptin homology (AH) domain/BAR domain"/>
    <property type="match status" value="1"/>
</dbReference>
<dbReference type="Gene3D" id="3.30.1520.10">
    <property type="entry name" value="Phox-like domain"/>
    <property type="match status" value="1"/>
</dbReference>
<dbReference type="InterPro" id="IPR027267">
    <property type="entry name" value="AH/BAR_dom_sf"/>
</dbReference>
<dbReference type="InterPro" id="IPR001683">
    <property type="entry name" value="PX_dom"/>
</dbReference>
<dbReference type="InterPro" id="IPR036871">
    <property type="entry name" value="PX_dom_sf"/>
</dbReference>
<dbReference type="InterPro" id="IPR037918">
    <property type="entry name" value="SNX2_PX"/>
</dbReference>
<dbReference type="InterPro" id="IPR005329">
    <property type="entry name" value="Sorting_nexin_N"/>
</dbReference>
<dbReference type="InterPro" id="IPR015404">
    <property type="entry name" value="Vps5_C"/>
</dbReference>
<dbReference type="PANTHER" id="PTHR10555">
    <property type="entry name" value="SORTING NEXIN"/>
    <property type="match status" value="1"/>
</dbReference>
<dbReference type="PANTHER" id="PTHR10555:SF31">
    <property type="entry name" value="SORTING NEXIN-2"/>
    <property type="match status" value="1"/>
</dbReference>
<dbReference type="Pfam" id="PF00787">
    <property type="entry name" value="PX"/>
    <property type="match status" value="1"/>
</dbReference>
<dbReference type="Pfam" id="PF03700">
    <property type="entry name" value="Sorting_nexin"/>
    <property type="match status" value="1"/>
</dbReference>
<dbReference type="Pfam" id="PF09325">
    <property type="entry name" value="Vps5"/>
    <property type="match status" value="1"/>
</dbReference>
<dbReference type="SMART" id="SM00312">
    <property type="entry name" value="PX"/>
    <property type="match status" value="1"/>
</dbReference>
<dbReference type="SUPFAM" id="SSF103657">
    <property type="entry name" value="BAR/IMD domain-like"/>
    <property type="match status" value="1"/>
</dbReference>
<dbReference type="SUPFAM" id="SSF64268">
    <property type="entry name" value="PX domain"/>
    <property type="match status" value="1"/>
</dbReference>
<dbReference type="PROSITE" id="PS50195">
    <property type="entry name" value="PX"/>
    <property type="match status" value="1"/>
</dbReference>
<organism>
    <name type="scientific">Bos taurus</name>
    <name type="common">Bovine</name>
    <dbReference type="NCBI Taxonomy" id="9913"/>
    <lineage>
        <taxon>Eukaryota</taxon>
        <taxon>Metazoa</taxon>
        <taxon>Chordata</taxon>
        <taxon>Craniata</taxon>
        <taxon>Vertebrata</taxon>
        <taxon>Euteleostomi</taxon>
        <taxon>Mammalia</taxon>
        <taxon>Eutheria</taxon>
        <taxon>Laurasiatheria</taxon>
        <taxon>Artiodactyla</taxon>
        <taxon>Ruminantia</taxon>
        <taxon>Pecora</taxon>
        <taxon>Bovidae</taxon>
        <taxon>Bovinae</taxon>
        <taxon>Bos</taxon>
    </lineage>
</organism>
<accession>Q2TBW7</accession>
<feature type="chain" id="PRO_0000245488" description="Sorting nexin-2">
    <location>
        <begin position="1"/>
        <end position="519"/>
    </location>
</feature>
<feature type="domain" description="PX" evidence="5">
    <location>
        <begin position="140"/>
        <end position="269"/>
    </location>
</feature>
<feature type="domain" description="BAR" evidence="2">
    <location>
        <begin position="299"/>
        <end position="519"/>
    </location>
</feature>
<feature type="region of interest" description="Disordered" evidence="6">
    <location>
        <begin position="1"/>
        <end position="20"/>
    </location>
</feature>
<feature type="region of interest" description="Disordered" evidence="6">
    <location>
        <begin position="30"/>
        <end position="103"/>
    </location>
</feature>
<feature type="region of interest" description="Interaction with RhoG" evidence="1">
    <location>
        <begin position="260"/>
        <end position="519"/>
    </location>
</feature>
<feature type="region of interest" description="Membrane-binding amphipathic helix" evidence="1">
    <location>
        <begin position="278"/>
        <end position="295"/>
    </location>
</feature>
<feature type="compositionally biased region" description="Low complexity" evidence="6">
    <location>
        <begin position="30"/>
        <end position="44"/>
    </location>
</feature>
<feature type="compositionally biased region" description="Low complexity" evidence="6">
    <location>
        <begin position="93"/>
        <end position="103"/>
    </location>
</feature>
<feature type="binding site" evidence="3">
    <location>
        <position position="183"/>
    </location>
    <ligand>
        <name>a 1,2-diacyl-sn-glycero-3-phospho-(1D-myo-inositol-3-phosphate)</name>
        <dbReference type="ChEBI" id="CHEBI:58088"/>
    </ligand>
</feature>
<feature type="binding site" evidence="3">
    <location>
        <position position="185"/>
    </location>
    <ligand>
        <name>a 1,2-diacyl-sn-glycero-3-phospho-(1D-myo-inositol-3-phosphate)</name>
        <dbReference type="ChEBI" id="CHEBI:58088"/>
    </ligand>
</feature>
<feature type="binding site" evidence="3">
    <location>
        <position position="211"/>
    </location>
    <ligand>
        <name>a 1,2-diacyl-sn-glycero-3-phospho-(1D-myo-inositol-3-phosphate)</name>
        <dbReference type="ChEBI" id="CHEBI:58088"/>
    </ligand>
</feature>
<feature type="binding site" evidence="3">
    <location>
        <position position="235"/>
    </location>
    <ligand>
        <name>a 1,2-diacyl-sn-glycero-3-phospho-(1D-myo-inositol-3-phosphate)</name>
        <dbReference type="ChEBI" id="CHEBI:58088"/>
    </ligand>
</feature>
<feature type="modified residue" description="Phosphoserine" evidence="4">
    <location>
        <position position="97"/>
    </location>
</feature>
<feature type="modified residue" description="Phosphothreonine" evidence="1">
    <location>
        <position position="101"/>
    </location>
</feature>
<feature type="modified residue" description="Phosphothreonine" evidence="1">
    <location>
        <position position="104"/>
    </location>
</feature>
<feature type="modified residue" description="Phosphoserine" evidence="1">
    <location>
        <position position="117"/>
    </location>
</feature>
<feature type="modified residue" description="Phosphoserine" evidence="1">
    <location>
        <position position="119"/>
    </location>
</feature>
<feature type="modified residue" description="Phosphoserine" evidence="1">
    <location>
        <position position="185"/>
    </location>
</feature>
<feature type="modified residue" description="Phosphoserine" evidence="1">
    <location>
        <position position="277"/>
    </location>
</feature>
<feature type="modified residue" description="N6-acetyllysine" evidence="1">
    <location>
        <position position="469"/>
    </location>
</feature>
<proteinExistence type="evidence at transcript level"/>